<accession>P0A001</accession>
<accession>Q99QN7</accession>
<reference key="1">
    <citation type="journal article" date="2001" name="Lancet">
        <title>Whole genome sequencing of meticillin-resistant Staphylococcus aureus.</title>
        <authorList>
            <person name="Kuroda M."/>
            <person name="Ohta T."/>
            <person name="Uchiyama I."/>
            <person name="Baba T."/>
            <person name="Yuzawa H."/>
            <person name="Kobayashi I."/>
            <person name="Cui L."/>
            <person name="Oguchi A."/>
            <person name="Aoki K."/>
            <person name="Nagai Y."/>
            <person name="Lian J.-Q."/>
            <person name="Ito T."/>
            <person name="Kanamori M."/>
            <person name="Matsumaru H."/>
            <person name="Maruyama A."/>
            <person name="Murakami H."/>
            <person name="Hosoyama A."/>
            <person name="Mizutani-Ui Y."/>
            <person name="Takahashi N.K."/>
            <person name="Sawano T."/>
            <person name="Inoue R."/>
            <person name="Kaito C."/>
            <person name="Sekimizu K."/>
            <person name="Hirakawa H."/>
            <person name="Kuhara S."/>
            <person name="Goto S."/>
            <person name="Yabuzaki J."/>
            <person name="Kanehisa M."/>
            <person name="Yamashita A."/>
            <person name="Oshima K."/>
            <person name="Furuya K."/>
            <person name="Yoshino C."/>
            <person name="Shiba T."/>
            <person name="Hattori M."/>
            <person name="Ogasawara N."/>
            <person name="Hayashi H."/>
            <person name="Hiramatsu K."/>
        </authorList>
    </citation>
    <scope>NUCLEOTIDE SEQUENCE [LARGE SCALE GENOMIC DNA]</scope>
    <source>
        <strain>Mu50 / ATCC 700699</strain>
    </source>
</reference>
<sequence length="77" mass="8549">MENFDKVKDIIVDRLGVDADKVTEDASFKDDLGADSLDIAELVMELEDEFGTEIPDEEAEKINTVGDAVKFINSLEK</sequence>
<dbReference type="EMBL" id="BA000017">
    <property type="protein sequence ID" value="BAB57394.1"/>
    <property type="molecule type" value="Genomic_DNA"/>
</dbReference>
<dbReference type="RefSeq" id="WP_000426914.1">
    <property type="nucleotide sequence ID" value="NC_002758.2"/>
</dbReference>
<dbReference type="SMR" id="P0A001"/>
<dbReference type="KEGG" id="sav:SAV1232"/>
<dbReference type="HOGENOM" id="CLU_108696_5_1_9"/>
<dbReference type="PhylomeDB" id="P0A001"/>
<dbReference type="UniPathway" id="UPA00094"/>
<dbReference type="Proteomes" id="UP000002481">
    <property type="component" value="Chromosome"/>
</dbReference>
<dbReference type="GO" id="GO:0005829">
    <property type="term" value="C:cytosol"/>
    <property type="evidence" value="ECO:0007669"/>
    <property type="project" value="TreeGrafter"/>
</dbReference>
<dbReference type="GO" id="GO:0016020">
    <property type="term" value="C:membrane"/>
    <property type="evidence" value="ECO:0007669"/>
    <property type="project" value="GOC"/>
</dbReference>
<dbReference type="GO" id="GO:0000035">
    <property type="term" value="F:acyl binding"/>
    <property type="evidence" value="ECO:0007669"/>
    <property type="project" value="TreeGrafter"/>
</dbReference>
<dbReference type="GO" id="GO:0000036">
    <property type="term" value="F:acyl carrier activity"/>
    <property type="evidence" value="ECO:0007669"/>
    <property type="project" value="UniProtKB-UniRule"/>
</dbReference>
<dbReference type="GO" id="GO:0009245">
    <property type="term" value="P:lipid A biosynthetic process"/>
    <property type="evidence" value="ECO:0007669"/>
    <property type="project" value="TreeGrafter"/>
</dbReference>
<dbReference type="GO" id="GO:0046677">
    <property type="term" value="P:response to antibiotic"/>
    <property type="evidence" value="ECO:0007669"/>
    <property type="project" value="UniProtKB-KW"/>
</dbReference>
<dbReference type="FunFam" id="1.10.1200.10:FF:000001">
    <property type="entry name" value="Acyl carrier protein"/>
    <property type="match status" value="1"/>
</dbReference>
<dbReference type="Gene3D" id="1.10.1200.10">
    <property type="entry name" value="ACP-like"/>
    <property type="match status" value="1"/>
</dbReference>
<dbReference type="HAMAP" id="MF_01217">
    <property type="entry name" value="Acyl_carrier"/>
    <property type="match status" value="1"/>
</dbReference>
<dbReference type="InterPro" id="IPR003231">
    <property type="entry name" value="ACP"/>
</dbReference>
<dbReference type="InterPro" id="IPR036736">
    <property type="entry name" value="ACP-like_sf"/>
</dbReference>
<dbReference type="InterPro" id="IPR009081">
    <property type="entry name" value="PP-bd_ACP"/>
</dbReference>
<dbReference type="InterPro" id="IPR006162">
    <property type="entry name" value="Ppantetheine_attach_site"/>
</dbReference>
<dbReference type="NCBIfam" id="TIGR00517">
    <property type="entry name" value="acyl_carrier"/>
    <property type="match status" value="1"/>
</dbReference>
<dbReference type="NCBIfam" id="NF002148">
    <property type="entry name" value="PRK00982.1-2"/>
    <property type="match status" value="1"/>
</dbReference>
<dbReference type="NCBIfam" id="NF002150">
    <property type="entry name" value="PRK00982.1-4"/>
    <property type="match status" value="1"/>
</dbReference>
<dbReference type="NCBIfam" id="NF002151">
    <property type="entry name" value="PRK00982.1-5"/>
    <property type="match status" value="1"/>
</dbReference>
<dbReference type="PANTHER" id="PTHR20863">
    <property type="entry name" value="ACYL CARRIER PROTEIN"/>
    <property type="match status" value="1"/>
</dbReference>
<dbReference type="PANTHER" id="PTHR20863:SF76">
    <property type="entry name" value="CARRIER DOMAIN-CONTAINING PROTEIN"/>
    <property type="match status" value="1"/>
</dbReference>
<dbReference type="Pfam" id="PF00550">
    <property type="entry name" value="PP-binding"/>
    <property type="match status" value="1"/>
</dbReference>
<dbReference type="SUPFAM" id="SSF47336">
    <property type="entry name" value="ACP-like"/>
    <property type="match status" value="1"/>
</dbReference>
<dbReference type="PROSITE" id="PS50075">
    <property type="entry name" value="CARRIER"/>
    <property type="match status" value="1"/>
</dbReference>
<dbReference type="PROSITE" id="PS00012">
    <property type="entry name" value="PHOSPHOPANTETHEINE"/>
    <property type="match status" value="1"/>
</dbReference>
<proteinExistence type="inferred from homology"/>
<keyword id="KW-0046">Antibiotic resistance</keyword>
<keyword id="KW-0963">Cytoplasm</keyword>
<keyword id="KW-0275">Fatty acid biosynthesis</keyword>
<keyword id="KW-0276">Fatty acid metabolism</keyword>
<keyword id="KW-0444">Lipid biosynthesis</keyword>
<keyword id="KW-0443">Lipid metabolism</keyword>
<keyword id="KW-0596">Phosphopantetheine</keyword>
<keyword id="KW-0597">Phosphoprotein</keyword>
<feature type="chain" id="PRO_0000180189" description="Acyl carrier protein">
    <location>
        <begin position="1"/>
        <end position="77"/>
    </location>
</feature>
<feature type="domain" description="Carrier" evidence="2">
    <location>
        <begin position="1"/>
        <end position="76"/>
    </location>
</feature>
<feature type="modified residue" description="O-(pantetheine 4'-phosphoryl)serine" evidence="2">
    <location>
        <position position="36"/>
    </location>
</feature>
<name>ACP_STAAM</name>
<gene>
    <name evidence="1" type="primary">acpP</name>
    <name type="synonym">hmrB</name>
    <name type="ordered locus">SAV1232</name>
</gene>
<protein>
    <recommendedName>
        <fullName evidence="1">Acyl carrier protein</fullName>
        <shortName evidence="1">ACP</shortName>
    </recommendedName>
</protein>
<comment type="function">
    <text evidence="1">Carrier of the growing fatty acid chain in fatty acid biosynthesis. Is able to confer high methicillin resistance to S.aureus when overproduced (By similarity).</text>
</comment>
<comment type="pathway">
    <text evidence="1">Lipid metabolism; fatty acid biosynthesis.</text>
</comment>
<comment type="subcellular location">
    <subcellularLocation>
        <location evidence="1">Cytoplasm</location>
    </subcellularLocation>
</comment>
<comment type="PTM">
    <text evidence="1">4'-phosphopantetheine is transferred from CoA to a specific serine of apo-ACP by AcpS. This modification is essential for activity because fatty acids are bound in thioester linkage to the sulfhydryl of the prosthetic group.</text>
</comment>
<comment type="similarity">
    <text evidence="1">Belongs to the acyl carrier protein (ACP) family.</text>
</comment>
<evidence type="ECO:0000255" key="1">
    <source>
        <dbReference type="HAMAP-Rule" id="MF_01217"/>
    </source>
</evidence>
<evidence type="ECO:0000255" key="2">
    <source>
        <dbReference type="PROSITE-ProRule" id="PRU00258"/>
    </source>
</evidence>
<organism>
    <name type="scientific">Staphylococcus aureus (strain Mu50 / ATCC 700699)</name>
    <dbReference type="NCBI Taxonomy" id="158878"/>
    <lineage>
        <taxon>Bacteria</taxon>
        <taxon>Bacillati</taxon>
        <taxon>Bacillota</taxon>
        <taxon>Bacilli</taxon>
        <taxon>Bacillales</taxon>
        <taxon>Staphylococcaceae</taxon>
        <taxon>Staphylococcus</taxon>
    </lineage>
</organism>